<proteinExistence type="inferred from homology"/>
<reference key="1">
    <citation type="journal article" date="2006" name="PLoS Genet.">
        <title>Who ate whom? Adaptive Helicobacter genomic changes that accompanied a host jump from early humans to large felines.</title>
        <authorList>
            <person name="Eppinger M."/>
            <person name="Baar C."/>
            <person name="Linz B."/>
            <person name="Raddatz G."/>
            <person name="Lanz C."/>
            <person name="Keller H."/>
            <person name="Morelli G."/>
            <person name="Gressmann H."/>
            <person name="Achtman M."/>
            <person name="Schuster S.C."/>
        </authorList>
    </citation>
    <scope>NUCLEOTIDE SEQUENCE [LARGE SCALE GENOMIC DNA]</scope>
    <source>
        <strain>Sheeba</strain>
    </source>
</reference>
<sequence>MQAIHNDKSLLSPFSELNTDNRTQREESGSTFKEQKGGEFSKLLKQSISELNNTQEQSDKALADMATGQIKDLHQAAIAIGKAETSMKLMLEVRNKAISAYKELLRTQI</sequence>
<feature type="chain" id="PRO_1000045857" description="Flagellar hook-basal body complex protein FliE">
    <location>
        <begin position="1"/>
        <end position="109"/>
    </location>
</feature>
<feature type="region of interest" description="Disordered" evidence="2">
    <location>
        <begin position="1"/>
        <end position="38"/>
    </location>
</feature>
<feature type="compositionally biased region" description="Basic and acidic residues" evidence="2">
    <location>
        <begin position="22"/>
        <end position="38"/>
    </location>
</feature>
<dbReference type="EMBL" id="AM260522">
    <property type="protein sequence ID" value="CAK00368.1"/>
    <property type="molecule type" value="Genomic_DNA"/>
</dbReference>
<dbReference type="RefSeq" id="WP_011578451.1">
    <property type="nucleotide sequence ID" value="NC_008229.1"/>
</dbReference>
<dbReference type="SMR" id="Q17VF8"/>
<dbReference type="STRING" id="382638.Hac_1665"/>
<dbReference type="GeneID" id="31758911"/>
<dbReference type="KEGG" id="hac:Hac_1665"/>
<dbReference type="eggNOG" id="COG1677">
    <property type="taxonomic scope" value="Bacteria"/>
</dbReference>
<dbReference type="HOGENOM" id="CLU_147249_3_1_7"/>
<dbReference type="OrthoDB" id="285952at2"/>
<dbReference type="BioCyc" id="HACI382638:HAC_RS07065-MONOMER"/>
<dbReference type="Proteomes" id="UP000000775">
    <property type="component" value="Chromosome"/>
</dbReference>
<dbReference type="GO" id="GO:0009425">
    <property type="term" value="C:bacterial-type flagellum basal body"/>
    <property type="evidence" value="ECO:0007669"/>
    <property type="project" value="UniProtKB-SubCell"/>
</dbReference>
<dbReference type="GO" id="GO:0003774">
    <property type="term" value="F:cytoskeletal motor activity"/>
    <property type="evidence" value="ECO:0007669"/>
    <property type="project" value="InterPro"/>
</dbReference>
<dbReference type="GO" id="GO:0005198">
    <property type="term" value="F:structural molecule activity"/>
    <property type="evidence" value="ECO:0007669"/>
    <property type="project" value="InterPro"/>
</dbReference>
<dbReference type="GO" id="GO:0071973">
    <property type="term" value="P:bacterial-type flagellum-dependent cell motility"/>
    <property type="evidence" value="ECO:0007669"/>
    <property type="project" value="InterPro"/>
</dbReference>
<dbReference type="HAMAP" id="MF_00724">
    <property type="entry name" value="FliE"/>
    <property type="match status" value="1"/>
</dbReference>
<dbReference type="InterPro" id="IPR001624">
    <property type="entry name" value="FliE"/>
</dbReference>
<dbReference type="NCBIfam" id="TIGR00205">
    <property type="entry name" value="fliE"/>
    <property type="match status" value="1"/>
</dbReference>
<dbReference type="PANTHER" id="PTHR34653">
    <property type="match status" value="1"/>
</dbReference>
<dbReference type="PANTHER" id="PTHR34653:SF1">
    <property type="entry name" value="FLAGELLAR HOOK-BASAL BODY COMPLEX PROTEIN FLIE"/>
    <property type="match status" value="1"/>
</dbReference>
<dbReference type="Pfam" id="PF02049">
    <property type="entry name" value="FliE"/>
    <property type="match status" value="1"/>
</dbReference>
<dbReference type="PRINTS" id="PR01006">
    <property type="entry name" value="FLGHOOKFLIE"/>
</dbReference>
<name>FLIE_HELAH</name>
<organism>
    <name type="scientific">Helicobacter acinonychis (strain Sheeba)</name>
    <dbReference type="NCBI Taxonomy" id="382638"/>
    <lineage>
        <taxon>Bacteria</taxon>
        <taxon>Pseudomonadati</taxon>
        <taxon>Campylobacterota</taxon>
        <taxon>Epsilonproteobacteria</taxon>
        <taxon>Campylobacterales</taxon>
        <taxon>Helicobacteraceae</taxon>
        <taxon>Helicobacter</taxon>
    </lineage>
</organism>
<keyword id="KW-0975">Bacterial flagellum</keyword>
<gene>
    <name evidence="1" type="primary">fliE</name>
    <name type="ordered locus">Hac_1665</name>
</gene>
<evidence type="ECO:0000255" key="1">
    <source>
        <dbReference type="HAMAP-Rule" id="MF_00724"/>
    </source>
</evidence>
<evidence type="ECO:0000256" key="2">
    <source>
        <dbReference type="SAM" id="MobiDB-lite"/>
    </source>
</evidence>
<accession>Q17VF8</accession>
<protein>
    <recommendedName>
        <fullName evidence="1">Flagellar hook-basal body complex protein FliE</fullName>
    </recommendedName>
</protein>
<comment type="subcellular location">
    <subcellularLocation>
        <location evidence="1">Bacterial flagellum basal body</location>
    </subcellularLocation>
</comment>
<comment type="similarity">
    <text evidence="1">Belongs to the FliE family.</text>
</comment>